<sequence>MVVIRLARGGAKKRPFYQIVVTDSRNARDGRFIERIGFFNPTAQGQAEKLRLDADRFAHWVSQGAQPSERVASLAAQAKKATA</sequence>
<evidence type="ECO:0000255" key="1">
    <source>
        <dbReference type="HAMAP-Rule" id="MF_00385"/>
    </source>
</evidence>
<evidence type="ECO:0000305" key="2"/>
<feature type="chain" id="PRO_1000122457" description="Small ribosomal subunit protein bS16">
    <location>
        <begin position="1"/>
        <end position="83"/>
    </location>
</feature>
<proteinExistence type="inferred from homology"/>
<gene>
    <name evidence="1" type="primary">rpsP</name>
    <name type="ordered locus">ABBFA_000348</name>
</gene>
<accession>B7GVR8</accession>
<organism>
    <name type="scientific">Acinetobacter baumannii (strain AB307-0294)</name>
    <dbReference type="NCBI Taxonomy" id="557600"/>
    <lineage>
        <taxon>Bacteria</taxon>
        <taxon>Pseudomonadati</taxon>
        <taxon>Pseudomonadota</taxon>
        <taxon>Gammaproteobacteria</taxon>
        <taxon>Moraxellales</taxon>
        <taxon>Moraxellaceae</taxon>
        <taxon>Acinetobacter</taxon>
        <taxon>Acinetobacter calcoaceticus/baumannii complex</taxon>
    </lineage>
</organism>
<reference key="1">
    <citation type="journal article" date="2008" name="J. Bacteriol.">
        <title>Comparative genome sequence analysis of multidrug-resistant Acinetobacter baumannii.</title>
        <authorList>
            <person name="Adams M.D."/>
            <person name="Goglin K."/>
            <person name="Molyneaux N."/>
            <person name="Hujer K.M."/>
            <person name="Lavender H."/>
            <person name="Jamison J.J."/>
            <person name="MacDonald I.J."/>
            <person name="Martin K.M."/>
            <person name="Russo T."/>
            <person name="Campagnari A.A."/>
            <person name="Hujer A.M."/>
            <person name="Bonomo R.A."/>
            <person name="Gill S.R."/>
        </authorList>
    </citation>
    <scope>NUCLEOTIDE SEQUENCE [LARGE SCALE GENOMIC DNA]</scope>
    <source>
        <strain>AB307-0294</strain>
    </source>
</reference>
<dbReference type="EMBL" id="CP001172">
    <property type="protein sequence ID" value="ACJ58349.1"/>
    <property type="molecule type" value="Genomic_DNA"/>
</dbReference>
<dbReference type="RefSeq" id="WP_000260334.1">
    <property type="nucleotide sequence ID" value="NZ_CP001172.1"/>
</dbReference>
<dbReference type="SMR" id="B7GVR8"/>
<dbReference type="GeneID" id="9380727"/>
<dbReference type="HOGENOM" id="CLU_100590_5_1_6"/>
<dbReference type="Proteomes" id="UP000006924">
    <property type="component" value="Chromosome"/>
</dbReference>
<dbReference type="GO" id="GO:0005737">
    <property type="term" value="C:cytoplasm"/>
    <property type="evidence" value="ECO:0007669"/>
    <property type="project" value="UniProtKB-ARBA"/>
</dbReference>
<dbReference type="GO" id="GO:0015935">
    <property type="term" value="C:small ribosomal subunit"/>
    <property type="evidence" value="ECO:0007669"/>
    <property type="project" value="TreeGrafter"/>
</dbReference>
<dbReference type="GO" id="GO:0003735">
    <property type="term" value="F:structural constituent of ribosome"/>
    <property type="evidence" value="ECO:0007669"/>
    <property type="project" value="InterPro"/>
</dbReference>
<dbReference type="GO" id="GO:0006412">
    <property type="term" value="P:translation"/>
    <property type="evidence" value="ECO:0007669"/>
    <property type="project" value="UniProtKB-UniRule"/>
</dbReference>
<dbReference type="FunFam" id="3.30.1320.10:FF:000001">
    <property type="entry name" value="30S ribosomal protein S16"/>
    <property type="match status" value="1"/>
</dbReference>
<dbReference type="Gene3D" id="3.30.1320.10">
    <property type="match status" value="1"/>
</dbReference>
<dbReference type="HAMAP" id="MF_00385">
    <property type="entry name" value="Ribosomal_bS16"/>
    <property type="match status" value="1"/>
</dbReference>
<dbReference type="InterPro" id="IPR000307">
    <property type="entry name" value="Ribosomal_bS16"/>
</dbReference>
<dbReference type="InterPro" id="IPR020592">
    <property type="entry name" value="Ribosomal_bS16_CS"/>
</dbReference>
<dbReference type="InterPro" id="IPR023803">
    <property type="entry name" value="Ribosomal_bS16_dom_sf"/>
</dbReference>
<dbReference type="NCBIfam" id="TIGR00002">
    <property type="entry name" value="S16"/>
    <property type="match status" value="1"/>
</dbReference>
<dbReference type="PANTHER" id="PTHR12919">
    <property type="entry name" value="30S RIBOSOMAL PROTEIN S16"/>
    <property type="match status" value="1"/>
</dbReference>
<dbReference type="PANTHER" id="PTHR12919:SF20">
    <property type="entry name" value="SMALL RIBOSOMAL SUBUNIT PROTEIN BS16M"/>
    <property type="match status" value="1"/>
</dbReference>
<dbReference type="Pfam" id="PF00886">
    <property type="entry name" value="Ribosomal_S16"/>
    <property type="match status" value="1"/>
</dbReference>
<dbReference type="SUPFAM" id="SSF54565">
    <property type="entry name" value="Ribosomal protein S16"/>
    <property type="match status" value="1"/>
</dbReference>
<dbReference type="PROSITE" id="PS00732">
    <property type="entry name" value="RIBOSOMAL_S16"/>
    <property type="match status" value="1"/>
</dbReference>
<protein>
    <recommendedName>
        <fullName evidence="1">Small ribosomal subunit protein bS16</fullName>
    </recommendedName>
    <alternativeName>
        <fullName evidence="2">30S ribosomal protein S16</fullName>
    </alternativeName>
</protein>
<comment type="similarity">
    <text evidence="1">Belongs to the bacterial ribosomal protein bS16 family.</text>
</comment>
<keyword id="KW-0687">Ribonucleoprotein</keyword>
<keyword id="KW-0689">Ribosomal protein</keyword>
<name>RS16_ACIB3</name>